<dbReference type="EMBL" id="CP000749">
    <property type="protein sequence ID" value="ABR73172.1"/>
    <property type="molecule type" value="Genomic_DNA"/>
</dbReference>
<dbReference type="SMR" id="A6W393"/>
<dbReference type="STRING" id="400668.Mmwyl1_4277"/>
<dbReference type="KEGG" id="mmw:Mmwyl1_4277"/>
<dbReference type="eggNOG" id="COG0051">
    <property type="taxonomic scope" value="Bacteria"/>
</dbReference>
<dbReference type="HOGENOM" id="CLU_122625_1_3_6"/>
<dbReference type="OrthoDB" id="9804464at2"/>
<dbReference type="GO" id="GO:1990904">
    <property type="term" value="C:ribonucleoprotein complex"/>
    <property type="evidence" value="ECO:0007669"/>
    <property type="project" value="UniProtKB-KW"/>
</dbReference>
<dbReference type="GO" id="GO:0005840">
    <property type="term" value="C:ribosome"/>
    <property type="evidence" value="ECO:0007669"/>
    <property type="project" value="UniProtKB-KW"/>
</dbReference>
<dbReference type="GO" id="GO:0003735">
    <property type="term" value="F:structural constituent of ribosome"/>
    <property type="evidence" value="ECO:0007669"/>
    <property type="project" value="InterPro"/>
</dbReference>
<dbReference type="GO" id="GO:0000049">
    <property type="term" value="F:tRNA binding"/>
    <property type="evidence" value="ECO:0007669"/>
    <property type="project" value="UniProtKB-UniRule"/>
</dbReference>
<dbReference type="GO" id="GO:0006412">
    <property type="term" value="P:translation"/>
    <property type="evidence" value="ECO:0007669"/>
    <property type="project" value="UniProtKB-UniRule"/>
</dbReference>
<dbReference type="FunFam" id="3.30.70.600:FF:000001">
    <property type="entry name" value="30S ribosomal protein S10"/>
    <property type="match status" value="1"/>
</dbReference>
<dbReference type="Gene3D" id="3.30.70.600">
    <property type="entry name" value="Ribosomal protein S10 domain"/>
    <property type="match status" value="1"/>
</dbReference>
<dbReference type="HAMAP" id="MF_00508">
    <property type="entry name" value="Ribosomal_uS10"/>
    <property type="match status" value="1"/>
</dbReference>
<dbReference type="InterPro" id="IPR001848">
    <property type="entry name" value="Ribosomal_uS10"/>
</dbReference>
<dbReference type="InterPro" id="IPR018268">
    <property type="entry name" value="Ribosomal_uS10_CS"/>
</dbReference>
<dbReference type="InterPro" id="IPR027486">
    <property type="entry name" value="Ribosomal_uS10_dom"/>
</dbReference>
<dbReference type="InterPro" id="IPR036838">
    <property type="entry name" value="Ribosomal_uS10_dom_sf"/>
</dbReference>
<dbReference type="NCBIfam" id="NF001861">
    <property type="entry name" value="PRK00596.1"/>
    <property type="match status" value="1"/>
</dbReference>
<dbReference type="NCBIfam" id="TIGR01049">
    <property type="entry name" value="rpsJ_bact"/>
    <property type="match status" value="1"/>
</dbReference>
<dbReference type="PANTHER" id="PTHR11700">
    <property type="entry name" value="30S RIBOSOMAL PROTEIN S10 FAMILY MEMBER"/>
    <property type="match status" value="1"/>
</dbReference>
<dbReference type="Pfam" id="PF00338">
    <property type="entry name" value="Ribosomal_S10"/>
    <property type="match status" value="1"/>
</dbReference>
<dbReference type="PRINTS" id="PR00971">
    <property type="entry name" value="RIBOSOMALS10"/>
</dbReference>
<dbReference type="SMART" id="SM01403">
    <property type="entry name" value="Ribosomal_S10"/>
    <property type="match status" value="1"/>
</dbReference>
<dbReference type="SUPFAM" id="SSF54999">
    <property type="entry name" value="Ribosomal protein S10"/>
    <property type="match status" value="1"/>
</dbReference>
<dbReference type="PROSITE" id="PS00361">
    <property type="entry name" value="RIBOSOMAL_S10"/>
    <property type="match status" value="1"/>
</dbReference>
<feature type="chain" id="PRO_1000081554" description="Small ribosomal subunit protein uS10">
    <location>
        <begin position="1"/>
        <end position="103"/>
    </location>
</feature>
<sequence>MQSQKIRIRLKAFDHRLIDASTQEIVDTAKRTGAQVRGPIPLPTRKERYTVLISPHVNKDARDQYEIRTHKRVLDIVEPTEKTVDALMKLDLAAGVEVQISLG</sequence>
<reference key="1">
    <citation type="submission" date="2007-06" db="EMBL/GenBank/DDBJ databases">
        <title>Complete sequence of Marinomonas sp. MWYL1.</title>
        <authorList>
            <consortium name="US DOE Joint Genome Institute"/>
            <person name="Copeland A."/>
            <person name="Lucas S."/>
            <person name="Lapidus A."/>
            <person name="Barry K."/>
            <person name="Glavina del Rio T."/>
            <person name="Dalin E."/>
            <person name="Tice H."/>
            <person name="Pitluck S."/>
            <person name="Kiss H."/>
            <person name="Brettin T."/>
            <person name="Bruce D."/>
            <person name="Detter J.C."/>
            <person name="Han C."/>
            <person name="Schmutz J."/>
            <person name="Larimer F."/>
            <person name="Land M."/>
            <person name="Hauser L."/>
            <person name="Kyrpides N."/>
            <person name="Kim E."/>
            <person name="Johnston A.W.B."/>
            <person name="Todd J.D."/>
            <person name="Rogers R."/>
            <person name="Wexler M."/>
            <person name="Bond P.L."/>
            <person name="Li Y."/>
            <person name="Richardson P."/>
        </authorList>
    </citation>
    <scope>NUCLEOTIDE SEQUENCE [LARGE SCALE GENOMIC DNA]</scope>
    <source>
        <strain>MWYL1</strain>
    </source>
</reference>
<accession>A6W393</accession>
<gene>
    <name evidence="1" type="primary">rpsJ</name>
    <name type="ordered locus">Mmwyl1_4277</name>
</gene>
<proteinExistence type="inferred from homology"/>
<evidence type="ECO:0000255" key="1">
    <source>
        <dbReference type="HAMAP-Rule" id="MF_00508"/>
    </source>
</evidence>
<evidence type="ECO:0000305" key="2"/>
<comment type="function">
    <text evidence="1">Involved in the binding of tRNA to the ribosomes.</text>
</comment>
<comment type="subunit">
    <text evidence="1">Part of the 30S ribosomal subunit.</text>
</comment>
<comment type="similarity">
    <text evidence="1">Belongs to the universal ribosomal protein uS10 family.</text>
</comment>
<keyword id="KW-0687">Ribonucleoprotein</keyword>
<keyword id="KW-0689">Ribosomal protein</keyword>
<organism>
    <name type="scientific">Marinomonas sp. (strain MWYL1)</name>
    <dbReference type="NCBI Taxonomy" id="400668"/>
    <lineage>
        <taxon>Bacteria</taxon>
        <taxon>Pseudomonadati</taxon>
        <taxon>Pseudomonadota</taxon>
        <taxon>Gammaproteobacteria</taxon>
        <taxon>Oceanospirillales</taxon>
        <taxon>Oceanospirillaceae</taxon>
        <taxon>Marinomonas</taxon>
    </lineage>
</organism>
<protein>
    <recommendedName>
        <fullName evidence="1">Small ribosomal subunit protein uS10</fullName>
    </recommendedName>
    <alternativeName>
        <fullName evidence="2">30S ribosomal protein S10</fullName>
    </alternativeName>
</protein>
<name>RS10_MARMS</name>